<reference key="1">
    <citation type="journal article" date="1985" name="Nucleic Acids Res.">
        <title>Sequence and analysis of the gene for bacteriophage T3 RNA polymerase.</title>
        <authorList>
            <person name="McGraw N.J."/>
            <person name="Bailey J.N."/>
            <person name="Cleaves G.R."/>
            <person name="Dembinski D.R."/>
            <person name="Gocke C.R."/>
            <person name="Joliffe L.K."/>
            <person name="Macwright R.S."/>
            <person name="McAllister W.T."/>
        </authorList>
    </citation>
    <scope>NUCLEOTIDE SEQUENCE [GENOMIC DNA]</scope>
    <source>
        <strain>Hausmann</strain>
    </source>
</reference>
<reference key="2">
    <citation type="journal article" date="1987" name="J. Mol. Biol.">
        <title>Sequence of a conditionally essential region of bacteriophage T3, including the primary origin of DNA replication.</title>
        <authorList>
            <person name="Schmitt M.P."/>
            <person name="Beck P.J."/>
            <person name="Kearney C.A."/>
            <person name="Spence J.L."/>
            <person name="Digiovanni D."/>
            <person name="Condreay J.P."/>
            <person name="Molineux I.J."/>
        </authorList>
    </citation>
    <scope>NUCLEOTIDE SEQUENCE [GENOMIC DNA] OF 855-884</scope>
    <source>
        <strain>Luria</strain>
    </source>
</reference>
<gene>
    <name type="primary">1</name>
</gene>
<comment type="function">
    <text>DNA-dependent RNA polymerase catalyzes the transcription of DNA into RNA using the four ribonucleoside triphosphates as substrates.</text>
</comment>
<comment type="catalytic activity">
    <reaction evidence="2 3">
        <text>RNA(n) + a ribonucleoside 5'-triphosphate = RNA(n+1) + diphosphate</text>
        <dbReference type="Rhea" id="RHEA:21248"/>
        <dbReference type="Rhea" id="RHEA-COMP:14527"/>
        <dbReference type="Rhea" id="RHEA-COMP:17342"/>
        <dbReference type="ChEBI" id="CHEBI:33019"/>
        <dbReference type="ChEBI" id="CHEBI:61557"/>
        <dbReference type="ChEBI" id="CHEBI:140395"/>
        <dbReference type="EC" id="2.7.7.6"/>
    </reaction>
</comment>
<comment type="similarity">
    <text evidence="4">Belongs to the phage and mitochondrial RNA polymerase family.</text>
</comment>
<keyword id="KW-0240">DNA-directed RNA polymerase</keyword>
<keyword id="KW-0548">Nucleotidyltransferase</keyword>
<keyword id="KW-0804">Transcription</keyword>
<keyword id="KW-0808">Transferase</keyword>
<keyword id="KW-1195">Viral transcription</keyword>
<accession>P07659</accession>
<feature type="chain" id="PRO_0000087748" description="DNA-directed RNA polymerase">
    <location>
        <begin position="1"/>
        <end position="884"/>
    </location>
</feature>
<feature type="active site" evidence="1">
    <location>
        <position position="538"/>
    </location>
</feature>
<feature type="active site" evidence="1">
    <location>
        <position position="632"/>
    </location>
</feature>
<feature type="active site" evidence="1">
    <location>
        <position position="813"/>
    </location>
</feature>
<protein>
    <recommendedName>
        <fullName>DNA-directed RNA polymerase</fullName>
        <ecNumber>2.7.7.6</ecNumber>
    </recommendedName>
</protein>
<evidence type="ECO:0000250" key="1"/>
<evidence type="ECO:0000255" key="2">
    <source>
        <dbReference type="PROSITE-ProRule" id="PRU10031"/>
    </source>
</evidence>
<evidence type="ECO:0000255" key="3">
    <source>
        <dbReference type="PROSITE-ProRule" id="PRU10032"/>
    </source>
</evidence>
<evidence type="ECO:0000305" key="4"/>
<dbReference type="EC" id="2.7.7.6"/>
<dbReference type="EMBL" id="X05031">
    <property type="protein sequence ID" value="CAA28696.1"/>
    <property type="molecule type" value="Genomic_DNA"/>
</dbReference>
<dbReference type="EMBL" id="X17255">
    <property type="protein sequence ID" value="CAA35121.1"/>
    <property type="molecule type" value="Genomic_DNA"/>
</dbReference>
<dbReference type="EMBL" id="X02981">
    <property type="protein sequence ID" value="CAA26719.1"/>
    <property type="molecule type" value="Genomic_DNA"/>
</dbReference>
<dbReference type="PIR" id="A29060">
    <property type="entry name" value="RNBPT3"/>
</dbReference>
<dbReference type="RefSeq" id="NP_523301.1">
    <property type="nucleotide sequence ID" value="NC_003298.1"/>
</dbReference>
<dbReference type="SMR" id="P07659"/>
<dbReference type="ChEMBL" id="CHEMBL4854"/>
<dbReference type="KEGG" id="vg:927437"/>
<dbReference type="OrthoDB" id="309at10239"/>
<dbReference type="PRO" id="PR:P07659"/>
<dbReference type="GO" id="GO:0000428">
    <property type="term" value="C:DNA-directed RNA polymerase complex"/>
    <property type="evidence" value="ECO:0007669"/>
    <property type="project" value="UniProtKB-KW"/>
</dbReference>
<dbReference type="GO" id="GO:0003677">
    <property type="term" value="F:DNA binding"/>
    <property type="evidence" value="ECO:0007669"/>
    <property type="project" value="InterPro"/>
</dbReference>
<dbReference type="GO" id="GO:0003899">
    <property type="term" value="F:DNA-directed RNA polymerase activity"/>
    <property type="evidence" value="ECO:0000314"/>
    <property type="project" value="CACAO"/>
</dbReference>
<dbReference type="GO" id="GO:0006351">
    <property type="term" value="P:DNA-templated transcription"/>
    <property type="evidence" value="ECO:0007669"/>
    <property type="project" value="InterPro"/>
</dbReference>
<dbReference type="GO" id="GO:0039695">
    <property type="term" value="P:DNA-templated viral transcription"/>
    <property type="evidence" value="ECO:0000314"/>
    <property type="project" value="UniProtKB"/>
</dbReference>
<dbReference type="FunFam" id="1.10.287.260:FF:000001">
    <property type="entry name" value="DNA-directed RNA polymerase"/>
    <property type="match status" value="1"/>
</dbReference>
<dbReference type="Gene3D" id="1.10.287.260">
    <property type="match status" value="1"/>
</dbReference>
<dbReference type="Gene3D" id="1.10.287.280">
    <property type="match status" value="1"/>
</dbReference>
<dbReference type="Gene3D" id="1.10.150.20">
    <property type="entry name" value="5' to 3' exonuclease, C-terminal subdomain"/>
    <property type="match status" value="1"/>
</dbReference>
<dbReference type="Gene3D" id="1.10.1320.10">
    <property type="entry name" value="DNA-directed RNA polymerase, N-terminal domain"/>
    <property type="match status" value="1"/>
</dbReference>
<dbReference type="InterPro" id="IPR024075">
    <property type="entry name" value="DNA-dir_RNA_pol_helix_hairp_sf"/>
</dbReference>
<dbReference type="InterPro" id="IPR046950">
    <property type="entry name" value="DNA-dir_Rpol_C_phage-type"/>
</dbReference>
<dbReference type="InterPro" id="IPR002092">
    <property type="entry name" value="DNA-dir_Rpol_phage-type"/>
</dbReference>
<dbReference type="InterPro" id="IPR043502">
    <property type="entry name" value="DNA/RNA_pol_sf"/>
</dbReference>
<dbReference type="InterPro" id="IPR037159">
    <property type="entry name" value="RNA_POL_N_sf"/>
</dbReference>
<dbReference type="InterPro" id="IPR029262">
    <property type="entry name" value="RPOL_N"/>
</dbReference>
<dbReference type="PANTHER" id="PTHR10102">
    <property type="entry name" value="DNA-DIRECTED RNA POLYMERASE, MITOCHONDRIAL"/>
    <property type="match status" value="1"/>
</dbReference>
<dbReference type="PANTHER" id="PTHR10102:SF0">
    <property type="entry name" value="DNA-DIRECTED RNA POLYMERASE, MITOCHONDRIAL"/>
    <property type="match status" value="1"/>
</dbReference>
<dbReference type="Pfam" id="PF00940">
    <property type="entry name" value="RNA_pol"/>
    <property type="match status" value="1"/>
</dbReference>
<dbReference type="Pfam" id="PF14700">
    <property type="entry name" value="RPOL_N"/>
    <property type="match status" value="1"/>
</dbReference>
<dbReference type="SMART" id="SM01311">
    <property type="entry name" value="RPOL_N"/>
    <property type="match status" value="1"/>
</dbReference>
<dbReference type="SUPFAM" id="SSF56672">
    <property type="entry name" value="DNA/RNA polymerases"/>
    <property type="match status" value="1"/>
</dbReference>
<dbReference type="PROSITE" id="PS00900">
    <property type="entry name" value="RNA_POL_PHAGE_1"/>
    <property type="match status" value="1"/>
</dbReference>
<dbReference type="PROSITE" id="PS00489">
    <property type="entry name" value="RNA_POL_PHAGE_2"/>
    <property type="match status" value="1"/>
</dbReference>
<proteinExistence type="inferred from homology"/>
<organismHost>
    <name type="scientific">Escherichia coli</name>
    <dbReference type="NCBI Taxonomy" id="562"/>
</organismHost>
<sequence length="884" mass="98790">MNIIENIEKNDFSEIELAAIPFNTLADHYGSALAKEQLALEHESYELGERRFLKMLERQAKAGEIADNAAAKPLLATLLPKLTTRIVEWLEEYASKKGRKPSAYAPLQLLKPEASAFITLKVILASLTSTNMTTIQAAAGMLGKAIEDEARFGRIRDLEAKHFKKHVEEQLNKRHGQVYKKAFMQVVEADMIGRGLLGGEAWSSWDKETTMHVGIRLIEMLIESTGLVELQRHNAGNAGSDHEALQLAQEYVDVLAKRAGALAGISPMFQPCVVPPKPWVAITGGGYWANGRRPLALVRTHSKKGLMRYEDVYMPEVYKAVNLAQNTAWKINKKVLAVVNEIVNWKNCPVADIPSLERQELPPKPDDIDTNEAALKEWKKAAAGIYRLDKARVSRRISLEFMLEQANKFASKKAIWFPYNMDWRGRVYAVPMFNPQGNDMTKGLLTLAKGKPIGEEGFYWLKIHGANCAGVDKVPFPERIAFIEKHVDDILACAKDPINNTWWAEQDSPFCFLAFCFEYAGVTHHGLSYNCSLPLAFDGSCSGIQHFSAMLRDEVGGRAVNLLPSETVQDIYGIVAQKVNEILKQDAINGTPNEMITVTDKDTGEISEKLKLGTSTLAQQWLAYGVTRSVTKRSVMTLAYGSKEFGFRQQVLDDTIQPAIDSGKGLMFTQPNQAAGYMAKLIWDAVSVTVVAAVEAMNWLKSAAKLLAAEVKDKKTKEILRHRCAVHWTTPDGFPVWQEYRKPLQKRLDMIFLGQFRLQPTINTLKDSGIDAHKQESGIAPNFVHSQDGSHLRMTVVYAHEKYGIESFALIHDSFGTIPADAGKLFKAVRETMVITYENNDVLADFYSQFADQLHETQLDKMPPLPKKGNLNLQDILKSDFAFA</sequence>
<name>RPOL_BPT3</name>
<organism>
    <name type="scientific">Enterobacteria phage T3</name>
    <name type="common">Bacteriophage T3</name>
    <dbReference type="NCBI Taxonomy" id="10759"/>
    <lineage>
        <taxon>Viruses</taxon>
        <taxon>Duplodnaviria</taxon>
        <taxon>Heunggongvirae</taxon>
        <taxon>Uroviricota</taxon>
        <taxon>Caudoviricetes</taxon>
        <taxon>Autographiviridae</taxon>
        <taxon>Studiervirinae</taxon>
        <taxon>Teetrevirus</taxon>
        <taxon>Teetrevirus T3</taxon>
    </lineage>
</organism>